<proteinExistence type="inferred from homology"/>
<keyword id="KW-0150">Chloroplast</keyword>
<keyword id="KW-0472">Membrane</keyword>
<keyword id="KW-0602">Photosynthesis</keyword>
<keyword id="KW-0603">Photosystem I</keyword>
<keyword id="KW-0934">Plastid</keyword>
<keyword id="KW-0732">Signal</keyword>
<keyword id="KW-0793">Thylakoid</keyword>
<keyword id="KW-0812">Transmembrane</keyword>
<keyword id="KW-1133">Transmembrane helix</keyword>
<sequence>MKNRIIIFIIGLFCLQPVASHADVAGLVPCKNSKEFQRRLDSSVKKLESRLSKYEPNTPPYLALETQINKTKNRFTQYGNAGLLCGTDGLPHLIADGRWSHAGEFMVPGLFFLYIAGWIGWVGRNYVQFASQTDKPTEKEIIIDVPVALSFISTGYIWPFAAFKEFTSGNLIAKEDEITVSPR</sequence>
<comment type="function">
    <text>Probably participates in efficiency of electron transfer from plastocyanin to P700 (or cytochrome c553 in algae and cyanobacteria). This plastocyanin-docking protein contributes to the specific association of plastocyanin to PSI.</text>
</comment>
<comment type="subcellular location">
    <subcellularLocation>
        <location evidence="2">Plastid</location>
        <location evidence="2">Chloroplast thylakoid membrane</location>
        <topology evidence="2">Multi-pass membrane protein</topology>
    </subcellularLocation>
</comment>
<comment type="similarity">
    <text evidence="2">Belongs to the PsaF family.</text>
</comment>
<reference key="1">
    <citation type="journal article" date="1999" name="J. Mol. Evol.">
        <title>The plastid genome of the cryptophyte alga, Guillardia theta: complete sequence and conserved synteny groups confirm its common ancestry with red algae.</title>
        <authorList>
            <person name="Douglas S.E."/>
            <person name="Penny S.L."/>
        </authorList>
    </citation>
    <scope>NUCLEOTIDE SEQUENCE [LARGE SCALE GENOMIC DNA]</scope>
</reference>
<dbReference type="EMBL" id="AF041468">
    <property type="protein sequence ID" value="AAC35648.1"/>
    <property type="molecule type" value="Genomic_DNA"/>
</dbReference>
<dbReference type="RefSeq" id="NP_050714.1">
    <property type="nucleotide sequence ID" value="NC_000926.1"/>
</dbReference>
<dbReference type="SMR" id="O78457"/>
<dbReference type="GeneID" id="857015"/>
<dbReference type="HOGENOM" id="CLU_098828_0_0_1"/>
<dbReference type="OMA" id="CIGWAGR"/>
<dbReference type="GO" id="GO:0009535">
    <property type="term" value="C:chloroplast thylakoid membrane"/>
    <property type="evidence" value="ECO:0007669"/>
    <property type="project" value="UniProtKB-SubCell"/>
</dbReference>
<dbReference type="GO" id="GO:0009538">
    <property type="term" value="C:photosystem I reaction center"/>
    <property type="evidence" value="ECO:0007669"/>
    <property type="project" value="InterPro"/>
</dbReference>
<dbReference type="GO" id="GO:0015979">
    <property type="term" value="P:photosynthesis"/>
    <property type="evidence" value="ECO:0007669"/>
    <property type="project" value="UniProtKB-KW"/>
</dbReference>
<dbReference type="FunFam" id="1.10.8.110:FF:000001">
    <property type="entry name" value="Photosystem I reaction center subunit III"/>
    <property type="match status" value="1"/>
</dbReference>
<dbReference type="Gene3D" id="1.10.8.110">
    <property type="entry name" value="Photosystem I PsaF, reaction centre subunit III"/>
    <property type="match status" value="1"/>
</dbReference>
<dbReference type="InterPro" id="IPR003666">
    <property type="entry name" value="PSI_PsaF"/>
</dbReference>
<dbReference type="InterPro" id="IPR036577">
    <property type="entry name" value="PSI_PsaF_sf"/>
</dbReference>
<dbReference type="PANTHER" id="PTHR34939">
    <property type="entry name" value="PHOTOSYSTEM I REACTION CENTER SUBUNIT III, CHLOROPLASTIC"/>
    <property type="match status" value="1"/>
</dbReference>
<dbReference type="PANTHER" id="PTHR34939:SF1">
    <property type="entry name" value="PHOTOSYSTEM I REACTION CENTER SUBUNIT III, CHLOROPLASTIC"/>
    <property type="match status" value="1"/>
</dbReference>
<dbReference type="Pfam" id="PF02507">
    <property type="entry name" value="PSI_PsaF"/>
    <property type="match status" value="1"/>
</dbReference>
<dbReference type="SUPFAM" id="SSF81536">
    <property type="entry name" value="Subunit III of photosystem I reaction centre, PsaF"/>
    <property type="match status" value="1"/>
</dbReference>
<organism>
    <name type="scientific">Guillardia theta</name>
    <name type="common">Cryptophyte</name>
    <name type="synonym">Cryptomonas phi</name>
    <dbReference type="NCBI Taxonomy" id="55529"/>
    <lineage>
        <taxon>Eukaryota</taxon>
        <taxon>Cryptophyceae</taxon>
        <taxon>Pyrenomonadales</taxon>
        <taxon>Geminigeraceae</taxon>
        <taxon>Guillardia</taxon>
    </lineage>
</organism>
<name>PSAF_GUITH</name>
<protein>
    <recommendedName>
        <fullName>Photosystem I reaction center subunit III</fullName>
    </recommendedName>
    <alternativeName>
        <fullName>PSI-F</fullName>
    </alternativeName>
</protein>
<accession>O78457</accession>
<feature type="signal peptide" evidence="1">
    <location>
        <begin position="1"/>
        <end position="20"/>
    </location>
</feature>
<feature type="chain" id="PRO_0000207753" description="Photosystem I reaction center subunit III">
    <location>
        <begin position="21"/>
        <end position="183"/>
    </location>
</feature>
<feature type="transmembrane region" description="Helical" evidence="1">
    <location>
        <begin position="102"/>
        <end position="122"/>
    </location>
</feature>
<feature type="transmembrane region" description="Helical" evidence="1">
    <location>
        <begin position="141"/>
        <end position="161"/>
    </location>
</feature>
<gene>
    <name type="primary">psaF</name>
</gene>
<evidence type="ECO:0000255" key="1"/>
<evidence type="ECO:0000305" key="2"/>
<geneLocation type="chloroplast"/>